<accession>B7LFG8</accession>
<organism>
    <name type="scientific">Escherichia coli (strain 55989 / EAEC)</name>
    <dbReference type="NCBI Taxonomy" id="585055"/>
    <lineage>
        <taxon>Bacteria</taxon>
        <taxon>Pseudomonadati</taxon>
        <taxon>Pseudomonadota</taxon>
        <taxon>Gammaproteobacteria</taxon>
        <taxon>Enterobacterales</taxon>
        <taxon>Enterobacteriaceae</taxon>
        <taxon>Escherichia</taxon>
    </lineage>
</organism>
<evidence type="ECO:0000255" key="1">
    <source>
        <dbReference type="HAMAP-Rule" id="MF_00346"/>
    </source>
</evidence>
<gene>
    <name evidence="1" type="primary">ygfB</name>
    <name type="ordered locus">EC55989_3197</name>
</gene>
<proteinExistence type="inferred from homology"/>
<feature type="chain" id="PRO_1000133396" description="UPF0149 protein YgfB">
    <location>
        <begin position="1"/>
        <end position="192"/>
    </location>
</feature>
<protein>
    <recommendedName>
        <fullName evidence="1">UPF0149 protein YgfB</fullName>
    </recommendedName>
</protein>
<keyword id="KW-1185">Reference proteome</keyword>
<dbReference type="EMBL" id="CU928145">
    <property type="protein sequence ID" value="CAU99166.1"/>
    <property type="molecule type" value="Genomic_DNA"/>
</dbReference>
<dbReference type="RefSeq" id="WP_001295378.1">
    <property type="nucleotide sequence ID" value="NZ_CP028304.1"/>
</dbReference>
<dbReference type="SMR" id="B7LFG8"/>
<dbReference type="GeneID" id="93779092"/>
<dbReference type="KEGG" id="eck:EC55989_3197"/>
<dbReference type="HOGENOM" id="CLU_085336_1_0_6"/>
<dbReference type="Proteomes" id="UP000000746">
    <property type="component" value="Chromosome"/>
</dbReference>
<dbReference type="GO" id="GO:0005829">
    <property type="term" value="C:cytosol"/>
    <property type="evidence" value="ECO:0007669"/>
    <property type="project" value="TreeGrafter"/>
</dbReference>
<dbReference type="FunFam" id="1.20.120.740:FF:000001">
    <property type="entry name" value="UPF0149 protein YgfB"/>
    <property type="match status" value="1"/>
</dbReference>
<dbReference type="Gene3D" id="1.20.120.740">
    <property type="entry name" value="YgfB uncharacterised protein family UPF0149, PF03695"/>
    <property type="match status" value="1"/>
</dbReference>
<dbReference type="HAMAP" id="MF_00346">
    <property type="entry name" value="UPF0149"/>
    <property type="match status" value="1"/>
</dbReference>
<dbReference type="InterPro" id="IPR011978">
    <property type="entry name" value="YgfB-like"/>
</dbReference>
<dbReference type="InterPro" id="IPR036255">
    <property type="entry name" value="YgfB-like_sf"/>
</dbReference>
<dbReference type="NCBIfam" id="NF002477">
    <property type="entry name" value="PRK01736.1"/>
    <property type="match status" value="1"/>
</dbReference>
<dbReference type="NCBIfam" id="TIGR02292">
    <property type="entry name" value="ygfB_yecA"/>
    <property type="match status" value="1"/>
</dbReference>
<dbReference type="PANTHER" id="PTHR37528">
    <property type="entry name" value="UPF0149 PROTEIN YGFB"/>
    <property type="match status" value="1"/>
</dbReference>
<dbReference type="PANTHER" id="PTHR37528:SF1">
    <property type="entry name" value="UPF0149 PROTEIN YGFB"/>
    <property type="match status" value="1"/>
</dbReference>
<dbReference type="Pfam" id="PF03695">
    <property type="entry name" value="UPF0149"/>
    <property type="match status" value="1"/>
</dbReference>
<dbReference type="SUPFAM" id="SSF101327">
    <property type="entry name" value="YgfB-like"/>
    <property type="match status" value="1"/>
</dbReference>
<reference key="1">
    <citation type="journal article" date="2009" name="PLoS Genet.">
        <title>Organised genome dynamics in the Escherichia coli species results in highly diverse adaptive paths.</title>
        <authorList>
            <person name="Touchon M."/>
            <person name="Hoede C."/>
            <person name="Tenaillon O."/>
            <person name="Barbe V."/>
            <person name="Baeriswyl S."/>
            <person name="Bidet P."/>
            <person name="Bingen E."/>
            <person name="Bonacorsi S."/>
            <person name="Bouchier C."/>
            <person name="Bouvet O."/>
            <person name="Calteau A."/>
            <person name="Chiapello H."/>
            <person name="Clermont O."/>
            <person name="Cruveiller S."/>
            <person name="Danchin A."/>
            <person name="Diard M."/>
            <person name="Dossat C."/>
            <person name="Karoui M.E."/>
            <person name="Frapy E."/>
            <person name="Garry L."/>
            <person name="Ghigo J.M."/>
            <person name="Gilles A.M."/>
            <person name="Johnson J."/>
            <person name="Le Bouguenec C."/>
            <person name="Lescat M."/>
            <person name="Mangenot S."/>
            <person name="Martinez-Jehanne V."/>
            <person name="Matic I."/>
            <person name="Nassif X."/>
            <person name="Oztas S."/>
            <person name="Petit M.A."/>
            <person name="Pichon C."/>
            <person name="Rouy Z."/>
            <person name="Ruf C.S."/>
            <person name="Schneider D."/>
            <person name="Tourret J."/>
            <person name="Vacherie B."/>
            <person name="Vallenet D."/>
            <person name="Medigue C."/>
            <person name="Rocha E.P.C."/>
            <person name="Denamur E."/>
        </authorList>
    </citation>
    <scope>NUCLEOTIDE SEQUENCE [LARGE SCALE GENOMIC DNA]</scope>
    <source>
        <strain>55989 / EAEC</strain>
    </source>
</reference>
<sequence>MSIQNEMPGYNEMNQYLNQQGTGLTPAEMHGLISGMICGGNDDSSWLPLLHDLTNEGMAFGHELAQALRKMHSATSDALQDDGFLFQLYLPDGDDVSVFDRADALAGWVNHFLLGLGVTQPKLDKVTGETGEAIDDLRNIAQLGYDEDEDQEELEMSLEEIIEYVRVAALLCHDTFTHPQPTAPEVQKPTLH</sequence>
<comment type="similarity">
    <text evidence="1">Belongs to the UPF0149 family.</text>
</comment>
<name>YGFB_ECO55</name>